<accession>Q8EEU9</accession>
<proteinExistence type="inferred from homology"/>
<organism>
    <name type="scientific">Shewanella oneidensis (strain ATCC 700550 / JCM 31522 / CIP 106686 / LMG 19005 / NCIMB 14063 / MR-1)</name>
    <dbReference type="NCBI Taxonomy" id="211586"/>
    <lineage>
        <taxon>Bacteria</taxon>
        <taxon>Pseudomonadati</taxon>
        <taxon>Pseudomonadota</taxon>
        <taxon>Gammaproteobacteria</taxon>
        <taxon>Alteromonadales</taxon>
        <taxon>Shewanellaceae</taxon>
        <taxon>Shewanella</taxon>
    </lineage>
</organism>
<dbReference type="EC" id="2.8.1.7" evidence="1"/>
<dbReference type="EMBL" id="AE014299">
    <property type="protein sequence ID" value="AAN55304.1"/>
    <property type="molecule type" value="Genomic_DNA"/>
</dbReference>
<dbReference type="RefSeq" id="NP_717860.1">
    <property type="nucleotide sequence ID" value="NC_004347.2"/>
</dbReference>
<dbReference type="RefSeq" id="WP_011072276.1">
    <property type="nucleotide sequence ID" value="NC_004347.2"/>
</dbReference>
<dbReference type="SMR" id="Q8EEU9"/>
<dbReference type="STRING" id="211586.SO_2264"/>
<dbReference type="PaxDb" id="211586-SO_2264"/>
<dbReference type="KEGG" id="son:SO_2264"/>
<dbReference type="PATRIC" id="fig|211586.12.peg.2180"/>
<dbReference type="eggNOG" id="COG1104">
    <property type="taxonomic scope" value="Bacteria"/>
</dbReference>
<dbReference type="HOGENOM" id="CLU_003433_0_2_6"/>
<dbReference type="OrthoDB" id="9808002at2"/>
<dbReference type="PhylomeDB" id="Q8EEU9"/>
<dbReference type="BioCyc" id="SONE211586:G1GMP-2068-MONOMER"/>
<dbReference type="UniPathway" id="UPA00266"/>
<dbReference type="Proteomes" id="UP000008186">
    <property type="component" value="Chromosome"/>
</dbReference>
<dbReference type="GO" id="GO:1990221">
    <property type="term" value="C:L-cysteine desulfurase complex"/>
    <property type="evidence" value="ECO:0007669"/>
    <property type="project" value="UniProtKB-ARBA"/>
</dbReference>
<dbReference type="GO" id="GO:0051537">
    <property type="term" value="F:2 iron, 2 sulfur cluster binding"/>
    <property type="evidence" value="ECO:0007669"/>
    <property type="project" value="UniProtKB-UniRule"/>
</dbReference>
<dbReference type="GO" id="GO:0031071">
    <property type="term" value="F:cysteine desulfurase activity"/>
    <property type="evidence" value="ECO:0007669"/>
    <property type="project" value="UniProtKB-UniRule"/>
</dbReference>
<dbReference type="GO" id="GO:0046872">
    <property type="term" value="F:metal ion binding"/>
    <property type="evidence" value="ECO:0007669"/>
    <property type="project" value="UniProtKB-KW"/>
</dbReference>
<dbReference type="GO" id="GO:0030170">
    <property type="term" value="F:pyridoxal phosphate binding"/>
    <property type="evidence" value="ECO:0007669"/>
    <property type="project" value="UniProtKB-UniRule"/>
</dbReference>
<dbReference type="GO" id="GO:0044571">
    <property type="term" value="P:[2Fe-2S] cluster assembly"/>
    <property type="evidence" value="ECO:0007669"/>
    <property type="project" value="UniProtKB-UniRule"/>
</dbReference>
<dbReference type="FunFam" id="3.40.640.10:FF:000003">
    <property type="entry name" value="Cysteine desulfurase IscS"/>
    <property type="match status" value="1"/>
</dbReference>
<dbReference type="FunFam" id="3.90.1150.10:FF:000002">
    <property type="entry name" value="Cysteine desulfurase IscS"/>
    <property type="match status" value="1"/>
</dbReference>
<dbReference type="Gene3D" id="3.90.1150.10">
    <property type="entry name" value="Aspartate Aminotransferase, domain 1"/>
    <property type="match status" value="1"/>
</dbReference>
<dbReference type="Gene3D" id="3.40.640.10">
    <property type="entry name" value="Type I PLP-dependent aspartate aminotransferase-like (Major domain)"/>
    <property type="match status" value="1"/>
</dbReference>
<dbReference type="HAMAP" id="MF_00331">
    <property type="entry name" value="Cys_desulf_IscS"/>
    <property type="match status" value="1"/>
</dbReference>
<dbReference type="InterPro" id="IPR000192">
    <property type="entry name" value="Aminotrans_V_dom"/>
</dbReference>
<dbReference type="InterPro" id="IPR020578">
    <property type="entry name" value="Aminotrans_V_PyrdxlP_BS"/>
</dbReference>
<dbReference type="InterPro" id="IPR010240">
    <property type="entry name" value="Cys_deSase_IscS"/>
</dbReference>
<dbReference type="InterPro" id="IPR016454">
    <property type="entry name" value="Cysteine_dSase"/>
</dbReference>
<dbReference type="InterPro" id="IPR015424">
    <property type="entry name" value="PyrdxlP-dep_Trfase"/>
</dbReference>
<dbReference type="InterPro" id="IPR015421">
    <property type="entry name" value="PyrdxlP-dep_Trfase_major"/>
</dbReference>
<dbReference type="InterPro" id="IPR015422">
    <property type="entry name" value="PyrdxlP-dep_Trfase_small"/>
</dbReference>
<dbReference type="NCBIfam" id="TIGR02006">
    <property type="entry name" value="IscS"/>
    <property type="match status" value="1"/>
</dbReference>
<dbReference type="NCBIfam" id="NF002806">
    <property type="entry name" value="PRK02948.1"/>
    <property type="match status" value="1"/>
</dbReference>
<dbReference type="NCBIfam" id="NF010611">
    <property type="entry name" value="PRK14012.1"/>
    <property type="match status" value="1"/>
</dbReference>
<dbReference type="PANTHER" id="PTHR11601:SF34">
    <property type="entry name" value="CYSTEINE DESULFURASE"/>
    <property type="match status" value="1"/>
</dbReference>
<dbReference type="PANTHER" id="PTHR11601">
    <property type="entry name" value="CYSTEINE DESULFURYLASE FAMILY MEMBER"/>
    <property type="match status" value="1"/>
</dbReference>
<dbReference type="Pfam" id="PF00266">
    <property type="entry name" value="Aminotran_5"/>
    <property type="match status" value="1"/>
</dbReference>
<dbReference type="PIRSF" id="PIRSF005572">
    <property type="entry name" value="NifS"/>
    <property type="match status" value="1"/>
</dbReference>
<dbReference type="SUPFAM" id="SSF53383">
    <property type="entry name" value="PLP-dependent transferases"/>
    <property type="match status" value="1"/>
</dbReference>
<dbReference type="PROSITE" id="PS00595">
    <property type="entry name" value="AA_TRANSFER_CLASS_5"/>
    <property type="match status" value="1"/>
</dbReference>
<gene>
    <name evidence="1" type="primary">iscS</name>
    <name type="ordered locus">SO_2264</name>
</gene>
<sequence>MKLPIYLDYAATTPVDPRVAEKMFQYMTMDGIFGNPASRSHRYGWQAEEAVDVARNQVADLINADHREIVFTSGATESNNLAIKGVAHFYKKKGKHIITSKTEHKAVLDTCRQLEREGFEVTYLEPESNGIIPMARLEAAMRDDTILVSIMHVNNEIGVIHDIDAIGELCRSKGIIFHMDAAQSAGKLPIDVQATKVDLISISGHKMYGPKGIGALYVRRKPRIRLEAQMHGGGHERGMRSGTLPTHQIVGLGEASAIAKAEMATDNVRIAKLRDKLWNGIKHIEETYVNGDMNQRTSGSLNVSFNYVEGESLMMALKDLAVSSGSACTSASLEPSYVLRALGLNDEMAHSSIRFSIGRFTTEEEIDHAIEVITQSIDKLREMSPLWEMFKDGIDLNQVQWAHH</sequence>
<feature type="chain" id="PRO_1000019446" description="Cysteine desulfurase IscS">
    <location>
        <begin position="1"/>
        <end position="404"/>
    </location>
</feature>
<feature type="active site" description="Cysteine persulfide intermediate" evidence="1">
    <location>
        <position position="328"/>
    </location>
</feature>
<feature type="binding site" evidence="1">
    <location>
        <begin position="75"/>
        <end position="76"/>
    </location>
    <ligand>
        <name>pyridoxal 5'-phosphate</name>
        <dbReference type="ChEBI" id="CHEBI:597326"/>
    </ligand>
</feature>
<feature type="binding site" evidence="1">
    <location>
        <position position="155"/>
    </location>
    <ligand>
        <name>pyridoxal 5'-phosphate</name>
        <dbReference type="ChEBI" id="CHEBI:597326"/>
    </ligand>
</feature>
<feature type="binding site" evidence="1">
    <location>
        <position position="183"/>
    </location>
    <ligand>
        <name>pyridoxal 5'-phosphate</name>
        <dbReference type="ChEBI" id="CHEBI:597326"/>
    </ligand>
</feature>
<feature type="binding site" evidence="1">
    <location>
        <begin position="203"/>
        <end position="205"/>
    </location>
    <ligand>
        <name>pyridoxal 5'-phosphate</name>
        <dbReference type="ChEBI" id="CHEBI:597326"/>
    </ligand>
</feature>
<feature type="binding site" evidence="1">
    <location>
        <position position="243"/>
    </location>
    <ligand>
        <name>pyridoxal 5'-phosphate</name>
        <dbReference type="ChEBI" id="CHEBI:597326"/>
    </ligand>
</feature>
<feature type="binding site" description="via persulfide group" evidence="1">
    <location>
        <position position="328"/>
    </location>
    <ligand>
        <name>[2Fe-2S] cluster</name>
        <dbReference type="ChEBI" id="CHEBI:190135"/>
        <note>ligand shared with IscU</note>
    </ligand>
</feature>
<feature type="modified residue" description="N6-(pyridoxal phosphate)lysine" evidence="1">
    <location>
        <position position="206"/>
    </location>
</feature>
<keyword id="KW-0001">2Fe-2S</keyword>
<keyword id="KW-0963">Cytoplasm</keyword>
<keyword id="KW-0408">Iron</keyword>
<keyword id="KW-0411">Iron-sulfur</keyword>
<keyword id="KW-0479">Metal-binding</keyword>
<keyword id="KW-0663">Pyridoxal phosphate</keyword>
<keyword id="KW-1185">Reference proteome</keyword>
<keyword id="KW-0808">Transferase</keyword>
<comment type="function">
    <text evidence="1">Master enzyme that delivers sulfur to a number of partners involved in Fe-S cluster assembly, tRNA modification or cofactor biosynthesis. Catalyzes the removal of elemental sulfur atoms from cysteine to produce alanine. Functions as a sulfur delivery protein for Fe-S cluster synthesis onto IscU, an Fe-S scaffold assembly protein, as well as other S acceptor proteins.</text>
</comment>
<comment type="catalytic activity">
    <reaction evidence="1">
        <text>(sulfur carrier)-H + L-cysteine = (sulfur carrier)-SH + L-alanine</text>
        <dbReference type="Rhea" id="RHEA:43892"/>
        <dbReference type="Rhea" id="RHEA-COMP:14737"/>
        <dbReference type="Rhea" id="RHEA-COMP:14739"/>
        <dbReference type="ChEBI" id="CHEBI:29917"/>
        <dbReference type="ChEBI" id="CHEBI:35235"/>
        <dbReference type="ChEBI" id="CHEBI:57972"/>
        <dbReference type="ChEBI" id="CHEBI:64428"/>
        <dbReference type="EC" id="2.8.1.7"/>
    </reaction>
</comment>
<comment type="cofactor">
    <cofactor evidence="1">
        <name>pyridoxal 5'-phosphate</name>
        <dbReference type="ChEBI" id="CHEBI:597326"/>
    </cofactor>
</comment>
<comment type="pathway">
    <text evidence="1">Cofactor biosynthesis; iron-sulfur cluster biosynthesis.</text>
</comment>
<comment type="subunit">
    <text evidence="1">Homodimer. Forms a heterotetramer with IscU, interacts with other sulfur acceptors.</text>
</comment>
<comment type="subcellular location">
    <subcellularLocation>
        <location evidence="1">Cytoplasm</location>
    </subcellularLocation>
</comment>
<comment type="similarity">
    <text evidence="1">Belongs to the class-V pyridoxal-phosphate-dependent aminotransferase family. NifS/IscS subfamily.</text>
</comment>
<protein>
    <recommendedName>
        <fullName evidence="1">Cysteine desulfurase IscS</fullName>
        <ecNumber evidence="1">2.8.1.7</ecNumber>
    </recommendedName>
</protein>
<name>ISCS_SHEON</name>
<evidence type="ECO:0000255" key="1">
    <source>
        <dbReference type="HAMAP-Rule" id="MF_00331"/>
    </source>
</evidence>
<reference key="1">
    <citation type="journal article" date="2002" name="Nat. Biotechnol.">
        <title>Genome sequence of the dissimilatory metal ion-reducing bacterium Shewanella oneidensis.</title>
        <authorList>
            <person name="Heidelberg J.F."/>
            <person name="Paulsen I.T."/>
            <person name="Nelson K.E."/>
            <person name="Gaidos E.J."/>
            <person name="Nelson W.C."/>
            <person name="Read T.D."/>
            <person name="Eisen J.A."/>
            <person name="Seshadri R."/>
            <person name="Ward N.L."/>
            <person name="Methe B.A."/>
            <person name="Clayton R.A."/>
            <person name="Meyer T."/>
            <person name="Tsapin A."/>
            <person name="Scott J."/>
            <person name="Beanan M.J."/>
            <person name="Brinkac L.M."/>
            <person name="Daugherty S.C."/>
            <person name="DeBoy R.T."/>
            <person name="Dodson R.J."/>
            <person name="Durkin A.S."/>
            <person name="Haft D.H."/>
            <person name="Kolonay J.F."/>
            <person name="Madupu R."/>
            <person name="Peterson J.D."/>
            <person name="Umayam L.A."/>
            <person name="White O."/>
            <person name="Wolf A.M."/>
            <person name="Vamathevan J.J."/>
            <person name="Weidman J.F."/>
            <person name="Impraim M."/>
            <person name="Lee K."/>
            <person name="Berry K.J."/>
            <person name="Lee C."/>
            <person name="Mueller J."/>
            <person name="Khouri H.M."/>
            <person name="Gill J."/>
            <person name="Utterback T.R."/>
            <person name="McDonald L.A."/>
            <person name="Feldblyum T.V."/>
            <person name="Smith H.O."/>
            <person name="Venter J.C."/>
            <person name="Nealson K.H."/>
            <person name="Fraser C.M."/>
        </authorList>
    </citation>
    <scope>NUCLEOTIDE SEQUENCE [LARGE SCALE GENOMIC DNA]</scope>
    <source>
        <strain>ATCC 700550 / JCM 31522 / CIP 106686 / LMG 19005 / NCIMB 14063 / MR-1</strain>
    </source>
</reference>